<sequence length="77" mass="8100">MSEEQLKAFIAKVQADTSLQEQLKAEGADVVAIAKAAGFTITTEDLNSHRQNLTDDELEGVAGGTASGGCDTSMFCY</sequence>
<gene>
    <name evidence="5 6" type="primary">ProcA4.3</name>
    <name evidence="10" type="ordered locus">PMT_0926</name>
</gene>
<evidence type="ECO:0000250" key="1">
    <source>
        <dbReference type="UniProtKB" id="H2A7G5"/>
    </source>
</evidence>
<evidence type="ECO:0000250" key="2">
    <source>
        <dbReference type="UniProtKB" id="Q7V8T1"/>
    </source>
</evidence>
<evidence type="ECO:0000269" key="3">
    <source>
    </source>
</evidence>
<evidence type="ECO:0000269" key="4">
    <source>
    </source>
</evidence>
<evidence type="ECO:0000303" key="5">
    <source>
    </source>
</evidence>
<evidence type="ECO:0000303" key="6">
    <source>
    </source>
</evidence>
<evidence type="ECO:0000305" key="7"/>
<evidence type="ECO:0000305" key="8">
    <source>
    </source>
</evidence>
<evidence type="ECO:0000305" key="9">
    <source>
    </source>
</evidence>
<evidence type="ECO:0000312" key="10">
    <source>
        <dbReference type="EMBL" id="CAE21101.1"/>
    </source>
</evidence>
<keyword id="KW-1185">Reference proteome</keyword>
<keyword id="KW-0964">Secreted</keyword>
<keyword id="KW-0883">Thioether bond</keyword>
<dbReference type="EMBL" id="BX548175">
    <property type="protein sequence ID" value="CAE21101.1"/>
    <property type="molecule type" value="Genomic_DNA"/>
</dbReference>
<dbReference type="RefSeq" id="WP_011130304.1">
    <property type="nucleotide sequence ID" value="NC_005071.1"/>
</dbReference>
<dbReference type="SMR" id="Q7V735"/>
<dbReference type="KEGG" id="pmt:PMT_0926"/>
<dbReference type="eggNOG" id="ENOG5034BZY">
    <property type="taxonomic scope" value="Bacteria"/>
</dbReference>
<dbReference type="HOGENOM" id="CLU_158613_2_0_3"/>
<dbReference type="OrthoDB" id="542288at2"/>
<dbReference type="Proteomes" id="UP000001423">
    <property type="component" value="Chromosome"/>
</dbReference>
<dbReference type="GO" id="GO:0005576">
    <property type="term" value="C:extracellular region"/>
    <property type="evidence" value="ECO:0007669"/>
    <property type="project" value="UniProtKB-SubCell"/>
</dbReference>
<dbReference type="InterPro" id="IPR022516">
    <property type="entry name" value="CHP03798_Ocin"/>
</dbReference>
<dbReference type="InterPro" id="IPR012903">
    <property type="entry name" value="Nif11"/>
</dbReference>
<dbReference type="NCBIfam" id="TIGR03798">
    <property type="entry name" value="leader_Nif11"/>
    <property type="match status" value="1"/>
</dbReference>
<dbReference type="Pfam" id="PF07862">
    <property type="entry name" value="Nif11"/>
    <property type="match status" value="1"/>
</dbReference>
<name>LAN43_PROMM</name>
<feature type="propeptide" id="PRO_0000450377" evidence="8 9">
    <location>
        <begin position="1"/>
        <end position="64"/>
    </location>
</feature>
<feature type="peptide" id="PRO_0000450378" description="Lantipeptide prochlorosin 4.3" evidence="8 9">
    <location>
        <begin position="65"/>
        <end position="77"/>
    </location>
</feature>
<feature type="modified residue" description="2,3-didehydrobutyrine" evidence="4 8">
    <location>
        <position position="65"/>
    </location>
</feature>
<feature type="cross-link" description="Lanthionine (Ser-Cys)" evidence="4 8">
    <location>
        <begin position="67"/>
        <end position="70"/>
    </location>
</feature>
<feature type="cross-link" description="Beta-methyllanthionine (Thr-Cys)" evidence="4 8">
    <location>
        <begin position="72"/>
        <end position="76"/>
    </location>
</feature>
<comment type="function">
    <text evidence="2 7 8 9">Lanthionine-containing peptide (lantipeptide) with unknown function (Probable). Does not show antibiotic activity against Lactococcus lactis 117 and Bacillus subtilis 6633 bacteria (By similarity). Organisms that produce this peptide live in oligotrophic environments at very dilute concentrations, suggesting this peptide is not secreted to influence other bacteria (Probable).</text>
</comment>
<comment type="subcellular location">
    <subcellularLocation>
        <location evidence="7">Secreted</location>
    </subcellularLocation>
</comment>
<comment type="induction">
    <text evidence="3">Down-regulated under nitrogen starvation.</text>
</comment>
<comment type="PTM">
    <text evidence="4">Cross-links are proved in vitro, when coepressed in E.coli with the ProcM lanthionine synthetase.</text>
</comment>
<comment type="PTM">
    <text evidence="4 9">The lanthionine residue has both a DL configuration (with 2S,6R stereochemistry) and a LL configuration (with 2R,6R stereochemistry) (PubMed:22574919). DL and LL diastomers have a 4:1 ratio (PubMed:22574919). It is unknown whether nonenzymatic cyclization occur, but authors favor a model in which ProcM does generate all thioether cross-links (Probable). The beta-methyllanthionine residue has a DL configuration (with 2S,3S,6R stereochemistry) (PubMed:22574919).</text>
</comment>
<comment type="PTM">
    <text evidence="1 9">Maturation of prochlorosin involves the enzymatic conversion of Thr, and Ser into dehydrated AA and the formation of thioether bonds with cysteines. This is followed by membrane translocation and cleavage of the modified precursor.</text>
</comment>
<proteinExistence type="evidence at protein level"/>
<protein>
    <recommendedName>
        <fullName evidence="5 6">Lantipeptide prochlorosin 4.3</fullName>
        <shortName evidence="5 6">Lantipeptide Pcn4.3</shortName>
    </recommendedName>
</protein>
<accession>Q7V735</accession>
<reference key="1">
    <citation type="journal article" date="2003" name="Nature">
        <title>Genome divergence in two Prochlorococcus ecotypes reflects oceanic niche differentiation.</title>
        <authorList>
            <person name="Rocap G."/>
            <person name="Larimer F.W."/>
            <person name="Lamerdin J.E."/>
            <person name="Malfatti S."/>
            <person name="Chain P."/>
            <person name="Ahlgren N.A."/>
            <person name="Arellano A."/>
            <person name="Coleman M."/>
            <person name="Hauser L."/>
            <person name="Hess W.R."/>
            <person name="Johnson Z.I."/>
            <person name="Land M.L."/>
            <person name="Lindell D."/>
            <person name="Post A.F."/>
            <person name="Regala W."/>
            <person name="Shah M."/>
            <person name="Shaw S.L."/>
            <person name="Steglich C."/>
            <person name="Sullivan M.B."/>
            <person name="Ting C.S."/>
            <person name="Tolonen A."/>
            <person name="Webb E.A."/>
            <person name="Zinser E.R."/>
            <person name="Chisholm S.W."/>
        </authorList>
    </citation>
    <scope>NUCLEOTIDE SEQUENCE [LARGE SCALE GENOMIC DNA]</scope>
    <source>
        <strain>MIT 9313</strain>
    </source>
</reference>
<reference key="2">
    <citation type="journal article" date="2010" name="Proc. Natl. Acad. Sci. U.S.A.">
        <title>Catalytic promiscuity in the biosynthesis of cyclic peptide secondary metabolites in planktonic marine cyanobacteria.</title>
        <authorList>
            <person name="Li B."/>
            <person name="Sher D."/>
            <person name="Kelly L."/>
            <person name="Shi Y."/>
            <person name="Huang K."/>
            <person name="Knerr P.J."/>
            <person name="Joewono I."/>
            <person name="Rusch D."/>
            <person name="Chisholm S.W."/>
            <person name="van der Donk W.A."/>
        </authorList>
    </citation>
    <scope>PRELIMINARY LANTHIONINE CROSS-LINKS</scope>
    <scope>DEHYDRATION AT THR-65</scope>
    <scope>INDUCTION BY NITROGEN STARVATION</scope>
    <source>
        <strain>MIT 9313</strain>
    </source>
</reference>
<reference key="3">
    <citation type="journal article" date="2012" name="Biochemistry">
        <title>Structural characterization of four prochlorosins: a novel class of lantipeptides produced by planktonic marine cyanobacteria.</title>
        <authorList>
            <person name="Tang W."/>
            <person name="van der Donk W.A."/>
        </authorList>
    </citation>
    <scope>STRUCTURE BY NMR OF 65-77</scope>
    <scope>DEHYDRATION AT THR-65</scope>
    <scope>LANTHIONINE CROSS-LINKS</scope>
    <scope>EXPRESSION IN E.COLI</scope>
    <source>
        <strain>MIT 9313</strain>
    </source>
</reference>
<organism>
    <name type="scientific">Prochlorococcus marinus (strain MIT 9313)</name>
    <dbReference type="NCBI Taxonomy" id="74547"/>
    <lineage>
        <taxon>Bacteria</taxon>
        <taxon>Bacillati</taxon>
        <taxon>Cyanobacteriota</taxon>
        <taxon>Cyanophyceae</taxon>
        <taxon>Synechococcales</taxon>
        <taxon>Prochlorococcaceae</taxon>
        <taxon>Prochlorococcus</taxon>
    </lineage>
</organism>